<gene>
    <name evidence="1" type="primary">argS</name>
    <name type="ordered locus">MK0758</name>
</gene>
<organism>
    <name type="scientific">Methanopyrus kandleri (strain AV19 / DSM 6324 / JCM 9639 / NBRC 100938)</name>
    <dbReference type="NCBI Taxonomy" id="190192"/>
    <lineage>
        <taxon>Archaea</taxon>
        <taxon>Methanobacteriati</taxon>
        <taxon>Methanobacteriota</taxon>
        <taxon>Methanomada group</taxon>
        <taxon>Methanopyri</taxon>
        <taxon>Methanopyrales</taxon>
        <taxon>Methanopyraceae</taxon>
        <taxon>Methanopyrus</taxon>
    </lineage>
</organism>
<reference key="1">
    <citation type="journal article" date="2002" name="Proc. Natl. Acad. Sci. U.S.A.">
        <title>The complete genome of hyperthermophile Methanopyrus kandleri AV19 and monophyly of archaeal methanogens.</title>
        <authorList>
            <person name="Slesarev A.I."/>
            <person name="Mezhevaya K.V."/>
            <person name="Makarova K.S."/>
            <person name="Polushin N.N."/>
            <person name="Shcherbinina O.V."/>
            <person name="Shakhova V.V."/>
            <person name="Belova G.I."/>
            <person name="Aravind L."/>
            <person name="Natale D.A."/>
            <person name="Rogozin I.B."/>
            <person name="Tatusov R.L."/>
            <person name="Wolf Y.I."/>
            <person name="Stetter K.O."/>
            <person name="Malykh A.G."/>
            <person name="Koonin E.V."/>
            <person name="Kozyavkin S.A."/>
        </authorList>
    </citation>
    <scope>NUCLEOTIDE SEQUENCE [LARGE SCALE GENOMIC DNA]</scope>
    <source>
        <strain>AV19 / DSM 6324 / JCM 9639 / NBRC 100938</strain>
    </source>
</reference>
<feature type="chain" id="PRO_0000151647" description="Arginine--tRNA ligase">
    <location>
        <begin position="1"/>
        <end position="592"/>
    </location>
</feature>
<feature type="short sequence motif" description="'HIGH' region">
    <location>
        <begin position="139"/>
        <end position="149"/>
    </location>
</feature>
<keyword id="KW-0030">Aminoacyl-tRNA synthetase</keyword>
<keyword id="KW-0067">ATP-binding</keyword>
<keyword id="KW-0963">Cytoplasm</keyword>
<keyword id="KW-0436">Ligase</keyword>
<keyword id="KW-0547">Nucleotide-binding</keyword>
<keyword id="KW-0648">Protein biosynthesis</keyword>
<keyword id="KW-1185">Reference proteome</keyword>
<comment type="catalytic activity">
    <reaction evidence="1">
        <text>tRNA(Arg) + L-arginine + ATP = L-arginyl-tRNA(Arg) + AMP + diphosphate</text>
        <dbReference type="Rhea" id="RHEA:20301"/>
        <dbReference type="Rhea" id="RHEA-COMP:9658"/>
        <dbReference type="Rhea" id="RHEA-COMP:9673"/>
        <dbReference type="ChEBI" id="CHEBI:30616"/>
        <dbReference type="ChEBI" id="CHEBI:32682"/>
        <dbReference type="ChEBI" id="CHEBI:33019"/>
        <dbReference type="ChEBI" id="CHEBI:78442"/>
        <dbReference type="ChEBI" id="CHEBI:78513"/>
        <dbReference type="ChEBI" id="CHEBI:456215"/>
        <dbReference type="EC" id="6.1.1.19"/>
    </reaction>
</comment>
<comment type="subcellular location">
    <subcellularLocation>
        <location evidence="1">Cytoplasm</location>
    </subcellularLocation>
</comment>
<comment type="similarity">
    <text evidence="1">Belongs to the class-I aminoacyl-tRNA synthetase family.</text>
</comment>
<evidence type="ECO:0000255" key="1">
    <source>
        <dbReference type="HAMAP-Rule" id="MF_00123"/>
    </source>
</evidence>
<protein>
    <recommendedName>
        <fullName evidence="1">Arginine--tRNA ligase</fullName>
        <ecNumber evidence="1">6.1.1.19</ecNumber>
    </recommendedName>
    <alternativeName>
        <fullName evidence="1">Arginyl-tRNA synthetase</fullName>
        <shortName evidence="1">ArgRS</shortName>
    </alternativeName>
</protein>
<name>SYR_METKA</name>
<sequence length="592" mass="67767">MAEETTPRDPFSVTIRTIRTSIRDAISSVYEVDELIEVPIDENPPVEGADLATPVALSLAKELDENPRELAETIVEESDLDDVVFVEKAWVEGPGFINLKLDRSQYAALTLRSIFYYGEEYGSLDLGMGRPVILEHTSANPNGPLHIGHGRNAVIGDILARCMVFTNYGVEVQYYVNDMGKQIAMLAWKYIKEGRPEVPEGEKPDEFFGKLYTEAAREIEEDPELEEVVERFLRSYERYLVEEESRAERIADAFQTVVEECLRGHIQTLERLRVAHDRFVYESEFARDALEIVEKLLDMGVAEEREDGAVVVDLEDYGIDKELVLTRSDGTTLYTTRDIAYHLWKLGRATFVVDVLGADHKLAVEQLRAVLDMLEENPDRIDVVFYEFIHLPEGSMSTRKGRYVTLDEFLEEAKKRALEKMKAAGVAEELSDEEREKIAEEIAIGAVRFAIARVSPNKPIEFDWDEALDFRRGGPFIQYAYARAKSILRKADEEVNRFDAAYLNDDHSFELILKMSKFPRHVAQCVRKRRPDILAEYAYDLAKTFHTFYEEVPVLHVEDDEVREARLKLVEAFTIVAENLMNLLGIPTLERM</sequence>
<accession>Q8TXB6</accession>
<dbReference type="EC" id="6.1.1.19" evidence="1"/>
<dbReference type="EMBL" id="AE009439">
    <property type="protein sequence ID" value="AAM01972.1"/>
    <property type="molecule type" value="Genomic_DNA"/>
</dbReference>
<dbReference type="RefSeq" id="WP_011019127.1">
    <property type="nucleotide sequence ID" value="NC_003551.1"/>
</dbReference>
<dbReference type="SMR" id="Q8TXB6"/>
<dbReference type="FunCoup" id="Q8TXB6">
    <property type="interactions" value="200"/>
</dbReference>
<dbReference type="STRING" id="190192.MK0758"/>
<dbReference type="PaxDb" id="190192-MK0758"/>
<dbReference type="EnsemblBacteria" id="AAM01972">
    <property type="protein sequence ID" value="AAM01972"/>
    <property type="gene ID" value="MK0758"/>
</dbReference>
<dbReference type="GeneID" id="1476859"/>
<dbReference type="KEGG" id="mka:MK0758"/>
<dbReference type="PATRIC" id="fig|190192.8.peg.798"/>
<dbReference type="HOGENOM" id="CLU_006406_6_1_2"/>
<dbReference type="InParanoid" id="Q8TXB6"/>
<dbReference type="OrthoDB" id="372102at2157"/>
<dbReference type="Proteomes" id="UP000001826">
    <property type="component" value="Chromosome"/>
</dbReference>
<dbReference type="GO" id="GO:0005737">
    <property type="term" value="C:cytoplasm"/>
    <property type="evidence" value="ECO:0007669"/>
    <property type="project" value="UniProtKB-SubCell"/>
</dbReference>
<dbReference type="GO" id="GO:0004814">
    <property type="term" value="F:arginine-tRNA ligase activity"/>
    <property type="evidence" value="ECO:0007669"/>
    <property type="project" value="UniProtKB-UniRule"/>
</dbReference>
<dbReference type="GO" id="GO:0005524">
    <property type="term" value="F:ATP binding"/>
    <property type="evidence" value="ECO:0007669"/>
    <property type="project" value="UniProtKB-UniRule"/>
</dbReference>
<dbReference type="GO" id="GO:0006420">
    <property type="term" value="P:arginyl-tRNA aminoacylation"/>
    <property type="evidence" value="ECO:0007669"/>
    <property type="project" value="UniProtKB-UniRule"/>
</dbReference>
<dbReference type="CDD" id="cd00671">
    <property type="entry name" value="ArgRS_core"/>
    <property type="match status" value="1"/>
</dbReference>
<dbReference type="FunFam" id="1.10.730.10:FF:000006">
    <property type="entry name" value="Arginyl-tRNA synthetase 2, mitochondrial"/>
    <property type="match status" value="1"/>
</dbReference>
<dbReference type="Gene3D" id="3.30.1360.70">
    <property type="entry name" value="Arginyl tRNA synthetase N-terminal domain"/>
    <property type="match status" value="1"/>
</dbReference>
<dbReference type="Gene3D" id="3.40.50.620">
    <property type="entry name" value="HUPs"/>
    <property type="match status" value="1"/>
</dbReference>
<dbReference type="Gene3D" id="1.10.730.10">
    <property type="entry name" value="Isoleucyl-tRNA Synthetase, Domain 1"/>
    <property type="match status" value="1"/>
</dbReference>
<dbReference type="HAMAP" id="MF_00123">
    <property type="entry name" value="Arg_tRNA_synth"/>
    <property type="match status" value="1"/>
</dbReference>
<dbReference type="InterPro" id="IPR001412">
    <property type="entry name" value="aa-tRNA-synth_I_CS"/>
</dbReference>
<dbReference type="InterPro" id="IPR001278">
    <property type="entry name" value="Arg-tRNA-ligase"/>
</dbReference>
<dbReference type="InterPro" id="IPR005148">
    <property type="entry name" value="Arg-tRNA-synth_N"/>
</dbReference>
<dbReference type="InterPro" id="IPR036695">
    <property type="entry name" value="Arg-tRNA-synth_N_sf"/>
</dbReference>
<dbReference type="InterPro" id="IPR035684">
    <property type="entry name" value="ArgRS_core"/>
</dbReference>
<dbReference type="InterPro" id="IPR008909">
    <property type="entry name" value="DALR_anticod-bd"/>
</dbReference>
<dbReference type="InterPro" id="IPR014729">
    <property type="entry name" value="Rossmann-like_a/b/a_fold"/>
</dbReference>
<dbReference type="InterPro" id="IPR009080">
    <property type="entry name" value="tRNAsynth_Ia_anticodon-bd"/>
</dbReference>
<dbReference type="NCBIfam" id="TIGR00456">
    <property type="entry name" value="argS"/>
    <property type="match status" value="1"/>
</dbReference>
<dbReference type="PANTHER" id="PTHR11956:SF5">
    <property type="entry name" value="ARGININE--TRNA LIGASE, CYTOPLASMIC"/>
    <property type="match status" value="1"/>
</dbReference>
<dbReference type="PANTHER" id="PTHR11956">
    <property type="entry name" value="ARGINYL-TRNA SYNTHETASE"/>
    <property type="match status" value="1"/>
</dbReference>
<dbReference type="Pfam" id="PF03485">
    <property type="entry name" value="Arg_tRNA_synt_N"/>
    <property type="match status" value="1"/>
</dbReference>
<dbReference type="Pfam" id="PF05746">
    <property type="entry name" value="DALR_1"/>
    <property type="match status" value="1"/>
</dbReference>
<dbReference type="Pfam" id="PF00750">
    <property type="entry name" value="tRNA-synt_1d"/>
    <property type="match status" value="1"/>
</dbReference>
<dbReference type="PRINTS" id="PR01038">
    <property type="entry name" value="TRNASYNTHARG"/>
</dbReference>
<dbReference type="SMART" id="SM01016">
    <property type="entry name" value="Arg_tRNA_synt_N"/>
    <property type="match status" value="1"/>
</dbReference>
<dbReference type="SMART" id="SM00836">
    <property type="entry name" value="DALR_1"/>
    <property type="match status" value="1"/>
</dbReference>
<dbReference type="SUPFAM" id="SSF47323">
    <property type="entry name" value="Anticodon-binding domain of a subclass of class I aminoacyl-tRNA synthetases"/>
    <property type="match status" value="1"/>
</dbReference>
<dbReference type="SUPFAM" id="SSF55190">
    <property type="entry name" value="Arginyl-tRNA synthetase (ArgRS), N-terminal 'additional' domain"/>
    <property type="match status" value="1"/>
</dbReference>
<dbReference type="SUPFAM" id="SSF52374">
    <property type="entry name" value="Nucleotidylyl transferase"/>
    <property type="match status" value="1"/>
</dbReference>
<dbReference type="PROSITE" id="PS00178">
    <property type="entry name" value="AA_TRNA_LIGASE_I"/>
    <property type="match status" value="1"/>
</dbReference>
<proteinExistence type="inferred from homology"/>